<name>SGO1_DROME</name>
<proteinExistence type="evidence at protein level"/>
<keyword id="KW-0131">Cell cycle</keyword>
<keyword id="KW-0132">Cell division</keyword>
<keyword id="KW-0137">Centromere</keyword>
<keyword id="KW-0158">Chromosome</keyword>
<keyword id="KW-0159">Chromosome partition</keyword>
<keyword id="KW-0175">Coiled coil</keyword>
<keyword id="KW-0217">Developmental protein</keyword>
<keyword id="KW-0469">Meiosis</keyword>
<keyword id="KW-0498">Mitosis</keyword>
<keyword id="KW-0597">Phosphoprotein</keyword>
<keyword id="KW-1185">Reference proteome</keyword>
<protein>
    <recommendedName>
        <fullName>Shugoshin</fullName>
    </recommendedName>
    <alternativeName>
        <fullName>Meiotic protein S332</fullName>
    </alternativeName>
</protein>
<reference evidence="12" key="1">
    <citation type="journal article" date="1995" name="Cell">
        <title>Mei-S332, a Drosophila protein required for sister-chromatid cohesion, can localize to meiotic centromere regions.</title>
        <authorList>
            <person name="Kerrebrock A.W."/>
            <person name="Moore D.P."/>
            <person name="Wu J.S."/>
            <person name="Orr-Weaver T.L."/>
        </authorList>
    </citation>
    <scope>NUCLEOTIDE SEQUENCE [MRNA]</scope>
    <scope>FUNCTION</scope>
    <scope>SUBCELLULAR LOCATION</scope>
    <scope>MUTAGENESIS OF GLY-28; VAL-34; LEU-112; CYS-375; PRO-377 AND SER-384</scope>
    <source>
        <tissue>Testis</tissue>
    </source>
</reference>
<reference evidence="12" key="2">
    <citation type="journal article" date="2000" name="Science">
        <title>The genome sequence of Drosophila melanogaster.</title>
        <authorList>
            <person name="Adams M.D."/>
            <person name="Celniker S.E."/>
            <person name="Holt R.A."/>
            <person name="Evans C.A."/>
            <person name="Gocayne J.D."/>
            <person name="Amanatides P.G."/>
            <person name="Scherer S.E."/>
            <person name="Li P.W."/>
            <person name="Hoskins R.A."/>
            <person name="Galle R.F."/>
            <person name="George R.A."/>
            <person name="Lewis S.E."/>
            <person name="Richards S."/>
            <person name="Ashburner M."/>
            <person name="Henderson S.N."/>
            <person name="Sutton G.G."/>
            <person name="Wortman J.R."/>
            <person name="Yandell M.D."/>
            <person name="Zhang Q."/>
            <person name="Chen L.X."/>
            <person name="Brandon R.C."/>
            <person name="Rogers Y.-H.C."/>
            <person name="Blazej R.G."/>
            <person name="Champe M."/>
            <person name="Pfeiffer B.D."/>
            <person name="Wan K.H."/>
            <person name="Doyle C."/>
            <person name="Baxter E.G."/>
            <person name="Helt G."/>
            <person name="Nelson C.R."/>
            <person name="Miklos G.L.G."/>
            <person name="Abril J.F."/>
            <person name="Agbayani A."/>
            <person name="An H.-J."/>
            <person name="Andrews-Pfannkoch C."/>
            <person name="Baldwin D."/>
            <person name="Ballew R.M."/>
            <person name="Basu A."/>
            <person name="Baxendale J."/>
            <person name="Bayraktaroglu L."/>
            <person name="Beasley E.M."/>
            <person name="Beeson K.Y."/>
            <person name="Benos P.V."/>
            <person name="Berman B.P."/>
            <person name="Bhandari D."/>
            <person name="Bolshakov S."/>
            <person name="Borkova D."/>
            <person name="Botchan M.R."/>
            <person name="Bouck J."/>
            <person name="Brokstein P."/>
            <person name="Brottier P."/>
            <person name="Burtis K.C."/>
            <person name="Busam D.A."/>
            <person name="Butler H."/>
            <person name="Cadieu E."/>
            <person name="Center A."/>
            <person name="Chandra I."/>
            <person name="Cherry J.M."/>
            <person name="Cawley S."/>
            <person name="Dahlke C."/>
            <person name="Davenport L.B."/>
            <person name="Davies P."/>
            <person name="de Pablos B."/>
            <person name="Delcher A."/>
            <person name="Deng Z."/>
            <person name="Mays A.D."/>
            <person name="Dew I."/>
            <person name="Dietz S.M."/>
            <person name="Dodson K."/>
            <person name="Doup L.E."/>
            <person name="Downes M."/>
            <person name="Dugan-Rocha S."/>
            <person name="Dunkov B.C."/>
            <person name="Dunn P."/>
            <person name="Durbin K.J."/>
            <person name="Evangelista C.C."/>
            <person name="Ferraz C."/>
            <person name="Ferriera S."/>
            <person name="Fleischmann W."/>
            <person name="Fosler C."/>
            <person name="Gabrielian A.E."/>
            <person name="Garg N.S."/>
            <person name="Gelbart W.M."/>
            <person name="Glasser K."/>
            <person name="Glodek A."/>
            <person name="Gong F."/>
            <person name="Gorrell J.H."/>
            <person name="Gu Z."/>
            <person name="Guan P."/>
            <person name="Harris M."/>
            <person name="Harris N.L."/>
            <person name="Harvey D.A."/>
            <person name="Heiman T.J."/>
            <person name="Hernandez J.R."/>
            <person name="Houck J."/>
            <person name="Hostin D."/>
            <person name="Houston K.A."/>
            <person name="Howland T.J."/>
            <person name="Wei M.-H."/>
            <person name="Ibegwam C."/>
            <person name="Jalali M."/>
            <person name="Kalush F."/>
            <person name="Karpen G.H."/>
            <person name="Ke Z."/>
            <person name="Kennison J.A."/>
            <person name="Ketchum K.A."/>
            <person name="Kimmel B.E."/>
            <person name="Kodira C.D."/>
            <person name="Kraft C.L."/>
            <person name="Kravitz S."/>
            <person name="Kulp D."/>
            <person name="Lai Z."/>
            <person name="Lasko P."/>
            <person name="Lei Y."/>
            <person name="Levitsky A.A."/>
            <person name="Li J.H."/>
            <person name="Li Z."/>
            <person name="Liang Y."/>
            <person name="Lin X."/>
            <person name="Liu X."/>
            <person name="Mattei B."/>
            <person name="McIntosh T.C."/>
            <person name="McLeod M.P."/>
            <person name="McPherson D."/>
            <person name="Merkulov G."/>
            <person name="Milshina N.V."/>
            <person name="Mobarry C."/>
            <person name="Morris J."/>
            <person name="Moshrefi A."/>
            <person name="Mount S.M."/>
            <person name="Moy M."/>
            <person name="Murphy B."/>
            <person name="Murphy L."/>
            <person name="Muzny D.M."/>
            <person name="Nelson D.L."/>
            <person name="Nelson D.R."/>
            <person name="Nelson K.A."/>
            <person name="Nixon K."/>
            <person name="Nusskern D.R."/>
            <person name="Pacleb J.M."/>
            <person name="Palazzolo M."/>
            <person name="Pittman G.S."/>
            <person name="Pan S."/>
            <person name="Pollard J."/>
            <person name="Puri V."/>
            <person name="Reese M.G."/>
            <person name="Reinert K."/>
            <person name="Remington K."/>
            <person name="Saunders R.D.C."/>
            <person name="Scheeler F."/>
            <person name="Shen H."/>
            <person name="Shue B.C."/>
            <person name="Siden-Kiamos I."/>
            <person name="Simpson M."/>
            <person name="Skupski M.P."/>
            <person name="Smith T.J."/>
            <person name="Spier E."/>
            <person name="Spradling A.C."/>
            <person name="Stapleton M."/>
            <person name="Strong R."/>
            <person name="Sun E."/>
            <person name="Svirskas R."/>
            <person name="Tector C."/>
            <person name="Turner R."/>
            <person name="Venter E."/>
            <person name="Wang A.H."/>
            <person name="Wang X."/>
            <person name="Wang Z.-Y."/>
            <person name="Wassarman D.A."/>
            <person name="Weinstock G.M."/>
            <person name="Weissenbach J."/>
            <person name="Williams S.M."/>
            <person name="Woodage T."/>
            <person name="Worley K.C."/>
            <person name="Wu D."/>
            <person name="Yang S."/>
            <person name="Yao Q.A."/>
            <person name="Ye J."/>
            <person name="Yeh R.-F."/>
            <person name="Zaveri J.S."/>
            <person name="Zhan M."/>
            <person name="Zhang G."/>
            <person name="Zhao Q."/>
            <person name="Zheng L."/>
            <person name="Zheng X.H."/>
            <person name="Zhong F.N."/>
            <person name="Zhong W."/>
            <person name="Zhou X."/>
            <person name="Zhu S.C."/>
            <person name="Zhu X."/>
            <person name="Smith H.O."/>
            <person name="Gibbs R.A."/>
            <person name="Myers E.W."/>
            <person name="Rubin G.M."/>
            <person name="Venter J.C."/>
        </authorList>
    </citation>
    <scope>NUCLEOTIDE SEQUENCE [LARGE SCALE GENOMIC DNA]</scope>
    <source>
        <strain evidence="4">Berkeley</strain>
    </source>
</reference>
<reference key="3">
    <citation type="journal article" date="2002" name="Genome Biol.">
        <title>Annotation of the Drosophila melanogaster euchromatic genome: a systematic review.</title>
        <authorList>
            <person name="Misra S."/>
            <person name="Crosby M.A."/>
            <person name="Mungall C.J."/>
            <person name="Matthews B.B."/>
            <person name="Campbell K.S."/>
            <person name="Hradecky P."/>
            <person name="Huang Y."/>
            <person name="Kaminker J.S."/>
            <person name="Millburn G.H."/>
            <person name="Prochnik S.E."/>
            <person name="Smith C.D."/>
            <person name="Tupy J.L."/>
            <person name="Whitfield E.J."/>
            <person name="Bayraktaroglu L."/>
            <person name="Berman B.P."/>
            <person name="Bettencourt B.R."/>
            <person name="Celniker S.E."/>
            <person name="de Grey A.D.N.J."/>
            <person name="Drysdale R.A."/>
            <person name="Harris N.L."/>
            <person name="Richter J."/>
            <person name="Russo S."/>
            <person name="Schroeder A.J."/>
            <person name="Shu S.Q."/>
            <person name="Stapleton M."/>
            <person name="Yamada C."/>
            <person name="Ashburner M."/>
            <person name="Gelbart W.M."/>
            <person name="Rubin G.M."/>
            <person name="Lewis S.E."/>
        </authorList>
    </citation>
    <scope>GENOME REANNOTATION</scope>
    <source>
        <strain>Berkeley</strain>
    </source>
</reference>
<reference evidence="12" key="4">
    <citation type="journal article" date="2002" name="Genome Biol.">
        <title>A Drosophila full-length cDNA resource.</title>
        <authorList>
            <person name="Stapleton M."/>
            <person name="Carlson J.W."/>
            <person name="Brokstein P."/>
            <person name="Yu C."/>
            <person name="Champe M."/>
            <person name="George R.A."/>
            <person name="Guarin H."/>
            <person name="Kronmiller B."/>
            <person name="Pacleb J.M."/>
            <person name="Park S."/>
            <person name="Wan K.H."/>
            <person name="Rubin G.M."/>
            <person name="Celniker S.E."/>
        </authorList>
    </citation>
    <scope>NUCLEOTIDE SEQUENCE [LARGE SCALE MRNA]</scope>
    <source>
        <strain evidence="6">Berkeley</strain>
        <tissue evidence="6">Embryo</tissue>
    </source>
</reference>
<reference key="5">
    <citation type="journal article" date="1998" name="Genes Dev.">
        <title>Maintenance of sister-chromatid cohesion at the centromere by the Drosophila MEI-S332 protein.</title>
        <authorList>
            <person name="Tang T.-T."/>
            <person name="Bickel S.E."/>
            <person name="Young L.M."/>
            <person name="Orr-Weaver T.L."/>
        </authorList>
    </citation>
    <scope>FUNCTION</scope>
    <scope>SUBCELLULAR LOCATION</scope>
    <scope>SUBUNIT</scope>
    <scope>MUTAGENESIS OF ASN-13; GLY-28; VAL-34; SER-277; GLU-382 AND SER-384</scope>
</reference>
<reference key="6">
    <citation type="journal article" date="1998" name="J. Cell Biol.">
        <title>The cohesion protein MEI-S332 localizes to condensed meiotic and mitotic centromeres until sister chromatids separate.</title>
        <authorList>
            <person name="Moore D.P."/>
            <person name="Page A.W."/>
            <person name="Tang T.-T."/>
            <person name="Kerrebrock A.W."/>
            <person name="Orr-Weaver T.L."/>
        </authorList>
    </citation>
    <scope>FUNCTION</scope>
    <scope>SUBCELLULAR LOCATION</scope>
</reference>
<reference key="7">
    <citation type="journal article" date="1999" name="Chromosoma">
        <title>The mitotic centromeric protein MEI-S332 and its role in sister-chromatid cohesion.</title>
        <authorList>
            <person name="LeBlanc H.N."/>
            <person name="Tang T.-T."/>
            <person name="Wu J.S."/>
            <person name="Orr-Weaver T.L."/>
        </authorList>
    </citation>
    <scope>FUNCTION</scope>
    <scope>SUBCELLULAR LOCATION</scope>
</reference>
<reference key="8">
    <citation type="journal article" date="2000" name="Curr. Biol.">
        <title>Sister-chromatid cohesion via MEI-S332 and kinetochore assembly are separable functions of the Drosophila centromere.</title>
        <authorList>
            <person name="Lopez J.M."/>
            <person name="Karpen G.H."/>
            <person name="Orr-Weaver T.L."/>
        </authorList>
    </citation>
    <scope>SUBCELLULAR LOCATION</scope>
</reference>
<reference key="9">
    <citation type="journal article" date="2004" name="Curr. Biol.">
        <title>Control of centromere localization of the MEI-S332 cohesion protection protein.</title>
        <authorList>
            <person name="Lee J.Y."/>
            <person name="Dej K.J."/>
            <person name="Lopez J.M."/>
            <person name="Orr-Weaver T.L."/>
        </authorList>
    </citation>
    <scope>LACK OF DEGRADATION</scope>
</reference>
<reference key="10">
    <citation type="journal article" date="2005" name="Dev. Cell">
        <title>POLO kinase regulates the Drosophila centromere cohesion protein MEI-S332.</title>
        <authorList>
            <person name="Clarke A.S."/>
            <person name="Tang T.-T."/>
            <person name="Ooi D.L.-Y."/>
            <person name="Orr-Weaver T.L."/>
        </authorList>
    </citation>
    <scope>PHOSPHORYLATION</scope>
    <scope>PHOSPHORYLATION AT THR-331</scope>
    <scope>MUTAGENESIS OF SER-234 AND THR-331</scope>
</reference>
<reference key="11">
    <citation type="journal article" date="2006" name="Dev. Cell">
        <title>INCENP and Aurora B promote meiotic sister chromatid cohesion through localization of the Shugoshin MEI-S332 in Drosophila.</title>
        <authorList>
            <person name="Resnick T.D."/>
            <person name="Satinover D.L."/>
            <person name="MacIsaac F."/>
            <person name="Stukenberg P.T."/>
            <person name="Earnshaw W.C."/>
            <person name="Orr-Weaver T.L."/>
            <person name="Carmena M."/>
        </authorList>
    </citation>
    <scope>INTERACTION WITH INCENP</scope>
    <scope>PHOSPHORYLATION</scope>
    <scope>SUBCELLULAR LOCATION</scope>
    <scope>MUTAGENESIS OF 124-SER--SER-126</scope>
</reference>
<gene>
    <name type="primary">mei-S332</name>
    <name type="ORF">CG5303</name>
</gene>
<evidence type="ECO:0000255" key="1"/>
<evidence type="ECO:0000256" key="2">
    <source>
        <dbReference type="SAM" id="MobiDB-lite"/>
    </source>
</evidence>
<evidence type="ECO:0000269" key="3">
    <source>
    </source>
</evidence>
<evidence type="ECO:0000269" key="4">
    <source>
    </source>
</evidence>
<evidence type="ECO:0000269" key="5">
    <source>
    </source>
</evidence>
<evidence type="ECO:0000269" key="6">
    <source>
    </source>
</evidence>
<evidence type="ECO:0000269" key="7">
    <source>
    </source>
</evidence>
<evidence type="ECO:0000269" key="8">
    <source>
    </source>
</evidence>
<evidence type="ECO:0000269" key="9">
    <source>
    </source>
</evidence>
<evidence type="ECO:0000269" key="10">
    <source>
    </source>
</evidence>
<evidence type="ECO:0000269" key="11">
    <source>
    </source>
</evidence>
<evidence type="ECO:0000305" key="12"/>
<evidence type="ECO:0000305" key="13">
    <source>
    </source>
</evidence>
<evidence type="ECO:0000312" key="14">
    <source>
        <dbReference type="EMBL" id="AAL13862.1"/>
    </source>
</evidence>
<sequence>MGSKVEQQYKLLNAELMDQVQKQRLEIGEYRKRVISLEREIMDIREEHVLQNHRQRMENISIVRSLMLSLNVDSDSLAVRQEPAPAAQINRPSGPRRSSREICKDMRRTCALARTTRPISPRRSSSVTSTVSSTSRRSSAEVQSEVVTTRIPEDRRANKPTPPPRRPAELVFDEDDSDDDFDEAVSPVEETQTEQNEENNRLFSIIEENGSEGESTDSSSSCEAIYCDTTFESSPPNAQVTVTPSGRALREVDTNIPVAVSLSRGKETGKGSWLAISVAVEDSPQEPSIQCPRLAVTRPSQSSGIFPDVNGLTPRRSLFNGIGKMAGSTSTPKSFLVEEMPSIRTRSRTAANKKSENTDMSSSFCNNSARPSRSCRPTSLVEPSLKNKLRNGSKGKAKAKK</sequence>
<feature type="chain" id="PRO_0000055443" description="Shugoshin">
    <location>
        <begin position="1"/>
        <end position="401"/>
    </location>
</feature>
<feature type="region of interest" description="Disordered" evidence="2">
    <location>
        <begin position="82"/>
        <end position="197"/>
    </location>
</feature>
<feature type="region of interest" description="Disordered" evidence="2">
    <location>
        <begin position="338"/>
        <end position="401"/>
    </location>
</feature>
<feature type="coiled-coil region" evidence="1">
    <location>
        <begin position="3"/>
        <end position="49"/>
    </location>
</feature>
<feature type="compositionally biased region" description="Basic and acidic residues" evidence="2">
    <location>
        <begin position="98"/>
        <end position="108"/>
    </location>
</feature>
<feature type="compositionally biased region" description="Low complexity" evidence="2">
    <location>
        <begin position="114"/>
        <end position="137"/>
    </location>
</feature>
<feature type="compositionally biased region" description="Acidic residues" evidence="2">
    <location>
        <begin position="171"/>
        <end position="183"/>
    </location>
</feature>
<feature type="compositionally biased region" description="Polar residues" evidence="2">
    <location>
        <begin position="348"/>
        <end position="377"/>
    </location>
</feature>
<feature type="compositionally biased region" description="Basic residues" evidence="2">
    <location>
        <begin position="387"/>
        <end position="401"/>
    </location>
</feature>
<feature type="modified residue" description="Phosphoserine; by AurB" evidence="12">
    <location>
        <position position="124"/>
    </location>
</feature>
<feature type="modified residue" description="Phosphoserine; by AurB" evidence="12">
    <location>
        <position position="125"/>
    </location>
</feature>
<feature type="modified residue" description="Phosphoserine; by AurB" evidence="12">
    <location>
        <position position="126"/>
    </location>
</feature>
<feature type="modified residue" description="Phosphothreonine; by PLK1" evidence="13">
    <location>
        <position position="331"/>
    </location>
</feature>
<feature type="mutagenesis site" description="In mei-S332-9; induces missegregation of chromatids during meiosis." evidence="11">
    <original>N</original>
    <variation>I</variation>
    <location>
        <position position="13"/>
    </location>
</feature>
<feature type="mutagenesis site" description="In mei-S332-3; induces missegregation of chromatids during meiosis." evidence="9 11">
    <original>G</original>
    <variation>D</variation>
    <location>
        <position position="28"/>
    </location>
</feature>
<feature type="mutagenesis site" description="In mei-S332-8; induces missegregation of chromatids during meiosis." evidence="9 11">
    <original>V</original>
    <variation>E</variation>
    <location>
        <position position="34"/>
    </location>
</feature>
<feature type="mutagenesis site" description="In mei-S332-4; induces missegregation of chromatids during meiosis; when associated with H-." evidence="9">
    <original>L</original>
    <variation>M</variation>
    <location>
        <position position="112"/>
    </location>
</feature>
<feature type="mutagenesis site" description="Does not stably associate with centromeres during mitosis." evidence="8">
    <original>SSS</original>
    <variation>AAA</variation>
    <location>
        <begin position="124"/>
        <end position="126"/>
    </location>
</feature>
<feature type="mutagenesis site" description="Does not affect phosphorylation." evidence="7">
    <original>S</original>
    <variation>A</variation>
    <location>
        <position position="234"/>
    </location>
</feature>
<feature type="mutagenesis site" description="In mei-S332-5; induces missegregation of chromatids during meiosis." evidence="11">
    <original>S</original>
    <variation>F</variation>
    <location>
        <position position="277"/>
    </location>
</feature>
<feature type="mutagenesis site" description="Affects phosphorylation and localization to centromeres." evidence="7">
    <original>T</original>
    <variation>A</variation>
    <location>
        <position position="331"/>
    </location>
</feature>
<feature type="mutagenesis site" description="In mei-S332-2; induces missegregation of chromatids during meiosis." evidence="9">
    <original>C</original>
    <variation>Y</variation>
    <location>
        <position position="375"/>
    </location>
</feature>
<feature type="mutagenesis site" description="In mei-S332-4; induces missegregation of chromatids during meiosis; when associated with M-112." evidence="9">
    <original>P</original>
    <variation>H</variation>
    <location>
        <position position="377"/>
    </location>
</feature>
<feature type="mutagenesis site" description="In mei-S332-10; induces missegregation of chromatids during meiosis." evidence="11">
    <original>E</original>
    <variation>K</variation>
    <location>
        <position position="382"/>
    </location>
</feature>
<feature type="mutagenesis site" description="In mei-S332-6; induces missegregation of chromatids during meiosis." evidence="9 11">
    <original>S</original>
    <variation>R</variation>
    <location>
        <position position="384"/>
    </location>
</feature>
<comment type="function">
    <text evidence="3 9 10 11">Plays a central role in chromosome cohesion during meiosis and mitosis by preventing premature dissociation of cohesin complex from centromeres after prophase, when most of cohesin complex dissociates from chromosomes arms. May act by protecting or Rad21 from cleavage by Sse/separase. Required during meiosis in both males and females.</text>
</comment>
<comment type="subunit">
    <text evidence="8 11">Homodimer. Interacts with Incenp.</text>
</comment>
<comment type="subcellular location">
    <subcellularLocation>
        <location evidence="3 9 10 11">Chromosome</location>
        <location evidence="3 9 10 11">Centromere</location>
    </subcellularLocation>
    <text evidence="3 5 10">Localizes to the centromere of meiotic and mitotic chromosomes (PubMed:10654079, PubMed:9490715). During meiosis, it assembles onto centromeres during prometaphase I, remains attached until anaphase II, during which it is displaced from centromeres without being degraded (PubMed:9490715). Localization onto centromeres is independent of kinetochore formation and cohesin complex (PubMed:10985388).</text>
</comment>
<comment type="developmental stage">
    <text>Expressed both maternally and zygotically. Present throughout embryogenesis and larval stages.</text>
</comment>
<comment type="PTM">
    <text evidence="7 8">Phosphorylation by polo-like kinase (PLK) on Thr-331 antagonizes cohesive function. Phosphorylation on Thr-331 at the metaphase anaphase transition leads to its dissociation from centromeres. In contrast, phosphorylation by aurB/ial on either Ser-124, Ser-125 or Ser-126 is required for association with centromeres.</text>
</comment>
<comment type="similarity">
    <text evidence="12">Belongs to the shugoshin family.</text>
</comment>
<organism evidence="14">
    <name type="scientific">Drosophila melanogaster</name>
    <name type="common">Fruit fly</name>
    <dbReference type="NCBI Taxonomy" id="7227"/>
    <lineage>
        <taxon>Eukaryota</taxon>
        <taxon>Metazoa</taxon>
        <taxon>Ecdysozoa</taxon>
        <taxon>Arthropoda</taxon>
        <taxon>Hexapoda</taxon>
        <taxon>Insecta</taxon>
        <taxon>Pterygota</taxon>
        <taxon>Neoptera</taxon>
        <taxon>Endopterygota</taxon>
        <taxon>Diptera</taxon>
        <taxon>Brachycera</taxon>
        <taxon>Muscomorpha</taxon>
        <taxon>Ephydroidea</taxon>
        <taxon>Drosophilidae</taxon>
        <taxon>Drosophila</taxon>
        <taxon>Sophophora</taxon>
    </lineage>
</organism>
<dbReference type="EMBL" id="U36583">
    <property type="protein sequence ID" value="AAA87038.1"/>
    <property type="molecule type" value="mRNA"/>
</dbReference>
<dbReference type="EMBL" id="AE013599">
    <property type="protein sequence ID" value="AAF46802.1"/>
    <property type="molecule type" value="Genomic_DNA"/>
</dbReference>
<dbReference type="EMBL" id="AY058633">
    <property type="protein sequence ID" value="AAL13862.1"/>
    <property type="molecule type" value="mRNA"/>
</dbReference>
<dbReference type="PIR" id="A57226">
    <property type="entry name" value="A57226"/>
</dbReference>
<dbReference type="RefSeq" id="NP_001286705.1">
    <property type="nucleotide sequence ID" value="NM_001299776.1"/>
</dbReference>
<dbReference type="RefSeq" id="NP_476634.1">
    <property type="nucleotide sequence ID" value="NM_057286.5"/>
</dbReference>
<dbReference type="SMR" id="Q24141"/>
<dbReference type="BioGRID" id="63143">
    <property type="interactions" value="45"/>
</dbReference>
<dbReference type="DIP" id="DIP-17412N"/>
<dbReference type="FunCoup" id="Q24141">
    <property type="interactions" value="65"/>
</dbReference>
<dbReference type="IntAct" id="Q24141">
    <property type="interactions" value="11"/>
</dbReference>
<dbReference type="STRING" id="7227.FBpp0309743"/>
<dbReference type="GlyGen" id="Q24141">
    <property type="glycosylation" value="2 sites"/>
</dbReference>
<dbReference type="iPTMnet" id="Q24141"/>
<dbReference type="PaxDb" id="7227-FBpp0071675"/>
<dbReference type="DNASU" id="37523"/>
<dbReference type="EnsemblMetazoa" id="FBtr0071761">
    <property type="protein sequence ID" value="FBpp0071675"/>
    <property type="gene ID" value="FBgn0002715"/>
</dbReference>
<dbReference type="EnsemblMetazoa" id="FBtr0342979">
    <property type="protein sequence ID" value="FBpp0309743"/>
    <property type="gene ID" value="FBgn0002715"/>
</dbReference>
<dbReference type="GeneID" id="37523"/>
<dbReference type="KEGG" id="dme:Dmel_CG5303"/>
<dbReference type="AGR" id="FB:FBgn0002715"/>
<dbReference type="CTD" id="37523"/>
<dbReference type="FlyBase" id="FBgn0002715">
    <property type="gene designation" value="mei-S332"/>
</dbReference>
<dbReference type="VEuPathDB" id="VectorBase:FBgn0002715"/>
<dbReference type="eggNOG" id="ENOG502TCIV">
    <property type="taxonomic scope" value="Eukaryota"/>
</dbReference>
<dbReference type="HOGENOM" id="CLU_632032_0_0_1"/>
<dbReference type="InParanoid" id="Q24141"/>
<dbReference type="OMA" id="YCDTTIE"/>
<dbReference type="OrthoDB" id="7862396at2759"/>
<dbReference type="PhylomeDB" id="Q24141"/>
<dbReference type="SignaLink" id="Q24141"/>
<dbReference type="BioGRID-ORCS" id="37523">
    <property type="hits" value="0 hits in 1 CRISPR screen"/>
</dbReference>
<dbReference type="ChiTaRS" id="mei-S332">
    <property type="organism name" value="fly"/>
</dbReference>
<dbReference type="GenomeRNAi" id="37523"/>
<dbReference type="PRO" id="PR:Q24141"/>
<dbReference type="Proteomes" id="UP000000803">
    <property type="component" value="Chromosome 2R"/>
</dbReference>
<dbReference type="Bgee" id="FBgn0002715">
    <property type="expression patterns" value="Expressed in early-mid elongation-stage spermatid (Drosophila) in testis and 42 other cell types or tissues"/>
</dbReference>
<dbReference type="ExpressionAtlas" id="Q24141">
    <property type="expression patterns" value="baseline and differential"/>
</dbReference>
<dbReference type="GO" id="GO:0005694">
    <property type="term" value="C:chromosome"/>
    <property type="evidence" value="ECO:0000314"/>
    <property type="project" value="FlyBase"/>
</dbReference>
<dbReference type="GO" id="GO:0000775">
    <property type="term" value="C:chromosome, centromeric region"/>
    <property type="evidence" value="ECO:0000314"/>
    <property type="project" value="UniProtKB"/>
</dbReference>
<dbReference type="GO" id="GO:0000779">
    <property type="term" value="C:condensed chromosome, centromeric region"/>
    <property type="evidence" value="ECO:0000314"/>
    <property type="project" value="FlyBase"/>
</dbReference>
<dbReference type="GO" id="GO:0005634">
    <property type="term" value="C:nucleus"/>
    <property type="evidence" value="ECO:0007669"/>
    <property type="project" value="InterPro"/>
</dbReference>
<dbReference type="GO" id="GO:0005721">
    <property type="term" value="C:pericentric heterochromatin"/>
    <property type="evidence" value="ECO:0000314"/>
    <property type="project" value="FlyBase"/>
</dbReference>
<dbReference type="GO" id="GO:0051301">
    <property type="term" value="P:cell division"/>
    <property type="evidence" value="ECO:0007669"/>
    <property type="project" value="UniProtKB-KW"/>
</dbReference>
<dbReference type="GO" id="GO:0007143">
    <property type="term" value="P:female meiotic nuclear division"/>
    <property type="evidence" value="ECO:0000315"/>
    <property type="project" value="FlyBase"/>
</dbReference>
<dbReference type="GO" id="GO:0007065">
    <property type="term" value="P:male meiosis sister chromatid cohesion"/>
    <property type="evidence" value="ECO:0000270"/>
    <property type="project" value="FlyBase"/>
</dbReference>
<dbReference type="GO" id="GO:0007140">
    <property type="term" value="P:male meiotic nuclear division"/>
    <property type="evidence" value="ECO:0000315"/>
    <property type="project" value="FlyBase"/>
</dbReference>
<dbReference type="GO" id="GO:0045132">
    <property type="term" value="P:meiotic chromosome segregation"/>
    <property type="evidence" value="ECO:0000315"/>
    <property type="project" value="FlyBase"/>
</dbReference>
<dbReference type="GO" id="GO:0007062">
    <property type="term" value="P:sister chromatid cohesion"/>
    <property type="evidence" value="ECO:0000314"/>
    <property type="project" value="UniProtKB"/>
</dbReference>
<dbReference type="InterPro" id="IPR011515">
    <property type="entry name" value="Shugoshin_C"/>
</dbReference>
<dbReference type="InterPro" id="IPR011516">
    <property type="entry name" value="Shugoshin_N"/>
</dbReference>
<dbReference type="Pfam" id="PF07557">
    <property type="entry name" value="Shugoshin_C"/>
    <property type="match status" value="1"/>
</dbReference>
<dbReference type="Pfam" id="PF07558">
    <property type="entry name" value="Shugoshin_N"/>
    <property type="match status" value="1"/>
</dbReference>
<accession>Q24141</accession>